<organism>
    <name type="scientific">Ruegeria pomeroyi (strain ATCC 700808 / DSM 15171 / DSS-3)</name>
    <name type="common">Silicibacter pomeroyi</name>
    <dbReference type="NCBI Taxonomy" id="246200"/>
    <lineage>
        <taxon>Bacteria</taxon>
        <taxon>Pseudomonadati</taxon>
        <taxon>Pseudomonadota</taxon>
        <taxon>Alphaproteobacteria</taxon>
        <taxon>Rhodobacterales</taxon>
        <taxon>Roseobacteraceae</taxon>
        <taxon>Ruegeria</taxon>
    </lineage>
</organism>
<accession>Q5LTT5</accession>
<comment type="function">
    <text evidence="1">Catalyzes the reversible conversion of ribose-5-phosphate to ribulose 5-phosphate.</text>
</comment>
<comment type="catalytic activity">
    <reaction evidence="1">
        <text>aldehydo-D-ribose 5-phosphate = D-ribulose 5-phosphate</text>
        <dbReference type="Rhea" id="RHEA:14657"/>
        <dbReference type="ChEBI" id="CHEBI:58121"/>
        <dbReference type="ChEBI" id="CHEBI:58273"/>
        <dbReference type="EC" id="5.3.1.6"/>
    </reaction>
</comment>
<comment type="pathway">
    <text evidence="1">Carbohydrate degradation; pentose phosphate pathway; D-ribose 5-phosphate from D-ribulose 5-phosphate (non-oxidative stage): step 1/1.</text>
</comment>
<comment type="subunit">
    <text evidence="1">Homodimer.</text>
</comment>
<comment type="similarity">
    <text evidence="1">Belongs to the ribose 5-phosphate isomerase family.</text>
</comment>
<feature type="chain" id="PRO_0000158462" description="Ribose-5-phosphate isomerase A">
    <location>
        <begin position="1"/>
        <end position="262"/>
    </location>
</feature>
<feature type="active site" description="Proton acceptor" evidence="1">
    <location>
        <position position="111"/>
    </location>
</feature>
<feature type="binding site" evidence="1">
    <location>
        <begin position="33"/>
        <end position="36"/>
    </location>
    <ligand>
        <name>substrate</name>
    </ligand>
</feature>
<feature type="binding site" evidence="1">
    <location>
        <begin position="89"/>
        <end position="92"/>
    </location>
    <ligand>
        <name>substrate</name>
    </ligand>
</feature>
<feature type="binding site" evidence="1">
    <location>
        <begin position="102"/>
        <end position="105"/>
    </location>
    <ligand>
        <name>substrate</name>
    </ligand>
</feature>
<feature type="binding site" evidence="1">
    <location>
        <position position="129"/>
    </location>
    <ligand>
        <name>substrate</name>
    </ligand>
</feature>
<name>RPIA_RUEPO</name>
<keyword id="KW-0413">Isomerase</keyword>
<keyword id="KW-1185">Reference proteome</keyword>
<proteinExistence type="inferred from homology"/>
<dbReference type="EC" id="5.3.1.6" evidence="1"/>
<dbReference type="EMBL" id="CP000031">
    <property type="protein sequence ID" value="AAV94616.1"/>
    <property type="molecule type" value="Genomic_DNA"/>
</dbReference>
<dbReference type="RefSeq" id="WP_011047066.1">
    <property type="nucleotide sequence ID" value="NC_003911.12"/>
</dbReference>
<dbReference type="SMR" id="Q5LTT5"/>
<dbReference type="STRING" id="246200.SPO1327"/>
<dbReference type="PaxDb" id="246200-SPO1327"/>
<dbReference type="KEGG" id="sil:SPO1327"/>
<dbReference type="eggNOG" id="COG0120">
    <property type="taxonomic scope" value="Bacteria"/>
</dbReference>
<dbReference type="HOGENOM" id="CLU_056590_1_0_5"/>
<dbReference type="OrthoDB" id="5870696at2"/>
<dbReference type="UniPathway" id="UPA00115">
    <property type="reaction ID" value="UER00412"/>
</dbReference>
<dbReference type="Proteomes" id="UP000001023">
    <property type="component" value="Chromosome"/>
</dbReference>
<dbReference type="GO" id="GO:0005829">
    <property type="term" value="C:cytosol"/>
    <property type="evidence" value="ECO:0007669"/>
    <property type="project" value="TreeGrafter"/>
</dbReference>
<dbReference type="GO" id="GO:0004751">
    <property type="term" value="F:ribose-5-phosphate isomerase activity"/>
    <property type="evidence" value="ECO:0007669"/>
    <property type="project" value="UniProtKB-UniRule"/>
</dbReference>
<dbReference type="GO" id="GO:0006014">
    <property type="term" value="P:D-ribose metabolic process"/>
    <property type="evidence" value="ECO:0007669"/>
    <property type="project" value="TreeGrafter"/>
</dbReference>
<dbReference type="GO" id="GO:0009052">
    <property type="term" value="P:pentose-phosphate shunt, non-oxidative branch"/>
    <property type="evidence" value="ECO:0007669"/>
    <property type="project" value="UniProtKB-UniRule"/>
</dbReference>
<dbReference type="CDD" id="cd01398">
    <property type="entry name" value="RPI_A"/>
    <property type="match status" value="1"/>
</dbReference>
<dbReference type="FunFam" id="3.40.50.1360:FF:000001">
    <property type="entry name" value="Ribose-5-phosphate isomerase A"/>
    <property type="match status" value="1"/>
</dbReference>
<dbReference type="Gene3D" id="3.30.70.260">
    <property type="match status" value="1"/>
</dbReference>
<dbReference type="Gene3D" id="3.40.50.1360">
    <property type="match status" value="1"/>
</dbReference>
<dbReference type="HAMAP" id="MF_00170">
    <property type="entry name" value="Rib_5P_isom_A"/>
    <property type="match status" value="1"/>
</dbReference>
<dbReference type="InterPro" id="IPR037171">
    <property type="entry name" value="NagB/RpiA_transferase-like"/>
</dbReference>
<dbReference type="InterPro" id="IPR020672">
    <property type="entry name" value="Ribose5P_isomerase_typA_subgr"/>
</dbReference>
<dbReference type="InterPro" id="IPR004788">
    <property type="entry name" value="Ribose5P_isomerase_type_A"/>
</dbReference>
<dbReference type="NCBIfam" id="NF001924">
    <property type="entry name" value="PRK00702.1"/>
    <property type="match status" value="1"/>
</dbReference>
<dbReference type="NCBIfam" id="TIGR00021">
    <property type="entry name" value="rpiA"/>
    <property type="match status" value="1"/>
</dbReference>
<dbReference type="PANTHER" id="PTHR11934">
    <property type="entry name" value="RIBOSE-5-PHOSPHATE ISOMERASE"/>
    <property type="match status" value="1"/>
</dbReference>
<dbReference type="PANTHER" id="PTHR11934:SF0">
    <property type="entry name" value="RIBOSE-5-PHOSPHATE ISOMERASE"/>
    <property type="match status" value="1"/>
</dbReference>
<dbReference type="Pfam" id="PF06026">
    <property type="entry name" value="Rib_5-P_isom_A"/>
    <property type="match status" value="1"/>
</dbReference>
<dbReference type="SUPFAM" id="SSF75445">
    <property type="entry name" value="D-ribose-5-phosphate isomerase (RpiA), lid domain"/>
    <property type="match status" value="1"/>
</dbReference>
<dbReference type="SUPFAM" id="SSF100950">
    <property type="entry name" value="NagB/RpiA/CoA transferase-like"/>
    <property type="match status" value="1"/>
</dbReference>
<reference key="1">
    <citation type="journal article" date="2004" name="Nature">
        <title>Genome sequence of Silicibacter pomeroyi reveals adaptations to the marine environment.</title>
        <authorList>
            <person name="Moran M.A."/>
            <person name="Buchan A."/>
            <person name="Gonzalez J.M."/>
            <person name="Heidelberg J.F."/>
            <person name="Whitman W.B."/>
            <person name="Kiene R.P."/>
            <person name="Henriksen J.R."/>
            <person name="King G.M."/>
            <person name="Belas R."/>
            <person name="Fuqua C."/>
            <person name="Brinkac L.M."/>
            <person name="Lewis M."/>
            <person name="Johri S."/>
            <person name="Weaver B."/>
            <person name="Pai G."/>
            <person name="Eisen J.A."/>
            <person name="Rahe E."/>
            <person name="Sheldon W.M."/>
            <person name="Ye W."/>
            <person name="Miller T.R."/>
            <person name="Carlton J."/>
            <person name="Rasko D.A."/>
            <person name="Paulsen I.T."/>
            <person name="Ren Q."/>
            <person name="Daugherty S.C."/>
            <person name="DeBoy R.T."/>
            <person name="Dodson R.J."/>
            <person name="Durkin A.S."/>
            <person name="Madupu R."/>
            <person name="Nelson W.C."/>
            <person name="Sullivan S.A."/>
            <person name="Rosovitz M.J."/>
            <person name="Haft D.H."/>
            <person name="Selengut J."/>
            <person name="Ward N."/>
        </authorList>
    </citation>
    <scope>NUCLEOTIDE SEQUENCE [LARGE SCALE GENOMIC DNA]</scope>
    <source>
        <strain>ATCC 700808 / DSM 15171 / DSS-3</strain>
    </source>
</reference>
<reference key="2">
    <citation type="journal article" date="2014" name="Stand. Genomic Sci.">
        <title>An updated genome annotation for the model marine bacterium Ruegeria pomeroyi DSS-3.</title>
        <authorList>
            <person name="Rivers A.R."/>
            <person name="Smith C.B."/>
            <person name="Moran M.A."/>
        </authorList>
    </citation>
    <scope>GENOME REANNOTATION</scope>
    <source>
        <strain>ATCC 700808 / DSM 15171 / DSS-3</strain>
    </source>
</reference>
<sequence length="262" mass="28300">MTGELSPIDKAKFVAAKRAADLVEDGMRVGLGTGSTAAWLVRCLGDMVRKEGLKMRGVPTSTRTAQLAREVGIEVITLDEARWLDITIDGADEFDGDLNLIKGGGGALLQEKIVATASDQMVVIADLGKEVSRLGAFPLPVEVIPFGWQTTQALLEETLISMDVLGRTATLRMNGDTPFVTDEGNHILDLHLQRIGNARQLALVLNQIPGVVENGLFIDICDTVVVGHGDGRVEIRDINQGTVEHDRLDFVESDNLFTDLAD</sequence>
<protein>
    <recommendedName>
        <fullName evidence="1">Ribose-5-phosphate isomerase A</fullName>
        <ecNumber evidence="1">5.3.1.6</ecNumber>
    </recommendedName>
    <alternativeName>
        <fullName evidence="1">Phosphoriboisomerase A</fullName>
        <shortName evidence="1">PRI</shortName>
    </alternativeName>
</protein>
<gene>
    <name evidence="1" type="primary">rpiA</name>
    <name type="ordered locus">SPO1327</name>
</gene>
<evidence type="ECO:0000255" key="1">
    <source>
        <dbReference type="HAMAP-Rule" id="MF_00170"/>
    </source>
</evidence>